<accession>Q5R8F7</accession>
<organism>
    <name type="scientific">Pongo abelii</name>
    <name type="common">Sumatran orangutan</name>
    <name type="synonym">Pongo pygmaeus abelii</name>
    <dbReference type="NCBI Taxonomy" id="9601"/>
    <lineage>
        <taxon>Eukaryota</taxon>
        <taxon>Metazoa</taxon>
        <taxon>Chordata</taxon>
        <taxon>Craniata</taxon>
        <taxon>Vertebrata</taxon>
        <taxon>Euteleostomi</taxon>
        <taxon>Mammalia</taxon>
        <taxon>Eutheria</taxon>
        <taxon>Euarchontoglires</taxon>
        <taxon>Primates</taxon>
        <taxon>Haplorrhini</taxon>
        <taxon>Catarrhini</taxon>
        <taxon>Hominidae</taxon>
        <taxon>Pongo</taxon>
    </lineage>
</organism>
<feature type="chain" id="PRO_0000292662" description="Polyadenylate-binding protein 1">
    <location>
        <begin position="1"/>
        <end position="636"/>
    </location>
</feature>
<feature type="domain" description="RRM 1" evidence="3">
    <location>
        <begin position="11"/>
        <end position="89"/>
    </location>
</feature>
<feature type="domain" description="RRM 2" evidence="3">
    <location>
        <begin position="99"/>
        <end position="175"/>
    </location>
</feature>
<feature type="domain" description="RRM 3" evidence="3">
    <location>
        <begin position="191"/>
        <end position="268"/>
    </location>
</feature>
<feature type="domain" description="RRM 4" evidence="3">
    <location>
        <begin position="294"/>
        <end position="370"/>
    </location>
</feature>
<feature type="domain" description="PABC" evidence="4">
    <location>
        <begin position="542"/>
        <end position="619"/>
    </location>
</feature>
<feature type="region of interest" description="CSDE1-binding">
    <location>
        <begin position="166"/>
        <end position="289"/>
    </location>
</feature>
<feature type="modified residue" description="N-acetylmethionine" evidence="1">
    <location>
        <position position="1"/>
    </location>
</feature>
<feature type="modified residue" description="N6-methyllysine" evidence="1">
    <location>
        <position position="299"/>
    </location>
</feature>
<feature type="modified residue" description="Phosphoserine" evidence="1">
    <location>
        <position position="315"/>
    </location>
</feature>
<feature type="modified residue" description="Phosphothreonine" evidence="1">
    <location>
        <position position="319"/>
    </location>
</feature>
<feature type="modified residue" description="Omega-N-methylarginine" evidence="1">
    <location>
        <position position="385"/>
    </location>
</feature>
<feature type="modified residue" description="Omega-N-methylarginine" evidence="1">
    <location>
        <position position="419"/>
    </location>
</feature>
<feature type="modified residue" description="Omega-N-methylarginine" evidence="1">
    <location>
        <position position="432"/>
    </location>
</feature>
<feature type="modified residue" description="Omega-N-methylarginine" evidence="1">
    <location>
        <position position="436"/>
    </location>
</feature>
<feature type="modified residue" description="Omega-N-methylated arginine; by CARM1" evidence="1">
    <location>
        <position position="455"/>
    </location>
</feature>
<feature type="modified residue" description="Omega-N-methylated arginine; by CARM1" evidence="1">
    <location>
        <position position="460"/>
    </location>
</feature>
<feature type="modified residue" description="Omega-N-methylarginine" evidence="2">
    <location>
        <position position="475"/>
    </location>
</feature>
<feature type="modified residue" description="Omega-N-methylarginine" evidence="1">
    <location>
        <position position="481"/>
    </location>
</feature>
<feature type="modified residue" description="Asymmetric dimethylarginine; alternate" evidence="1">
    <location>
        <position position="493"/>
    </location>
</feature>
<feature type="modified residue" description="Dimethylated arginine; alternate" evidence="1">
    <location>
        <position position="493"/>
    </location>
</feature>
<feature type="modified residue" description="Omega-N-methylarginine; alternate" evidence="1">
    <location>
        <position position="493"/>
    </location>
</feature>
<feature type="modified residue" description="Omega-N-methylarginine" evidence="1">
    <location>
        <position position="506"/>
    </location>
</feature>
<feature type="modified residue" description="N6-acetyllysine" evidence="1">
    <location>
        <position position="512"/>
    </location>
</feature>
<feature type="modified residue" description="Omega-N-methylarginine" evidence="1">
    <location>
        <position position="518"/>
    </location>
</feature>
<dbReference type="EMBL" id="CR859795">
    <property type="protein sequence ID" value="CAH91953.1"/>
    <property type="molecule type" value="mRNA"/>
</dbReference>
<dbReference type="RefSeq" id="NP_001128842.1">
    <property type="nucleotide sequence ID" value="NM_001135370.1"/>
</dbReference>
<dbReference type="BMRB" id="Q5R8F7"/>
<dbReference type="SMR" id="Q5R8F7"/>
<dbReference type="STRING" id="9601.ENSPPYP00000021076"/>
<dbReference type="GeneID" id="100189758"/>
<dbReference type="KEGG" id="pon:100189758"/>
<dbReference type="CTD" id="26986"/>
<dbReference type="eggNOG" id="KOG0123">
    <property type="taxonomic scope" value="Eukaryota"/>
</dbReference>
<dbReference type="InParanoid" id="Q5R8F7"/>
<dbReference type="OrthoDB" id="9520506at2759"/>
<dbReference type="Proteomes" id="UP000001595">
    <property type="component" value="Unplaced"/>
</dbReference>
<dbReference type="GO" id="GO:0031252">
    <property type="term" value="C:cell leading edge"/>
    <property type="evidence" value="ECO:0000250"/>
    <property type="project" value="UniProtKB"/>
</dbReference>
<dbReference type="GO" id="GO:0005737">
    <property type="term" value="C:cytoplasm"/>
    <property type="evidence" value="ECO:0000250"/>
    <property type="project" value="UniProtKB"/>
</dbReference>
<dbReference type="GO" id="GO:0010494">
    <property type="term" value="C:cytoplasmic stress granule"/>
    <property type="evidence" value="ECO:0000250"/>
    <property type="project" value="UniProtKB"/>
</dbReference>
<dbReference type="GO" id="GO:0030027">
    <property type="term" value="C:lamellipodium"/>
    <property type="evidence" value="ECO:0007669"/>
    <property type="project" value="UniProtKB-SubCell"/>
</dbReference>
<dbReference type="GO" id="GO:1990904">
    <property type="term" value="C:ribonucleoprotein complex"/>
    <property type="evidence" value="ECO:0000250"/>
    <property type="project" value="UniProtKB"/>
</dbReference>
<dbReference type="GO" id="GO:0005681">
    <property type="term" value="C:spliceosomal complex"/>
    <property type="evidence" value="ECO:0007669"/>
    <property type="project" value="UniProtKB-KW"/>
</dbReference>
<dbReference type="GO" id="GO:0003723">
    <property type="term" value="F:RNA binding"/>
    <property type="evidence" value="ECO:0007669"/>
    <property type="project" value="UniProtKB-KW"/>
</dbReference>
<dbReference type="GO" id="GO:0006397">
    <property type="term" value="P:mRNA processing"/>
    <property type="evidence" value="ECO:0007669"/>
    <property type="project" value="UniProtKB-KW"/>
</dbReference>
<dbReference type="GO" id="GO:2000623">
    <property type="term" value="P:negative regulation of nuclear-transcribed mRNA catabolic process, nonsense-mediated decay"/>
    <property type="evidence" value="ECO:0000250"/>
    <property type="project" value="UniProtKB"/>
</dbReference>
<dbReference type="GO" id="GO:0000184">
    <property type="term" value="P:nuclear-transcribed mRNA catabolic process, nonsense-mediated decay"/>
    <property type="evidence" value="ECO:0007669"/>
    <property type="project" value="UniProtKB-KW"/>
</dbReference>
<dbReference type="GO" id="GO:1900153">
    <property type="term" value="P:positive regulation of nuclear-transcribed mRNA catabolic process, deadenylation-dependent decay"/>
    <property type="evidence" value="ECO:0000250"/>
    <property type="project" value="UniProtKB"/>
</dbReference>
<dbReference type="GO" id="GO:0060213">
    <property type="term" value="P:positive regulation of nuclear-transcribed mRNA poly(A) tail shortening"/>
    <property type="evidence" value="ECO:0000250"/>
    <property type="project" value="UniProtKB"/>
</dbReference>
<dbReference type="GO" id="GO:0031047">
    <property type="term" value="P:regulatory ncRNA-mediated gene silencing"/>
    <property type="evidence" value="ECO:0000250"/>
    <property type="project" value="UniProtKB"/>
</dbReference>
<dbReference type="GO" id="GO:0008380">
    <property type="term" value="P:RNA splicing"/>
    <property type="evidence" value="ECO:0007669"/>
    <property type="project" value="UniProtKB-KW"/>
</dbReference>
<dbReference type="CDD" id="cd12378">
    <property type="entry name" value="RRM1_I_PABPs"/>
    <property type="match status" value="1"/>
</dbReference>
<dbReference type="CDD" id="cd12379">
    <property type="entry name" value="RRM2_I_PABPs"/>
    <property type="match status" value="1"/>
</dbReference>
<dbReference type="CDD" id="cd12380">
    <property type="entry name" value="RRM3_I_PABPs"/>
    <property type="match status" value="1"/>
</dbReference>
<dbReference type="CDD" id="cd12381">
    <property type="entry name" value="RRM4_I_PABPs"/>
    <property type="match status" value="1"/>
</dbReference>
<dbReference type="FunFam" id="1.10.1900.10:FF:000001">
    <property type="entry name" value="Polyadenylate-binding protein"/>
    <property type="match status" value="1"/>
</dbReference>
<dbReference type="FunFam" id="3.30.70.330:FF:000003">
    <property type="entry name" value="Polyadenylate-binding protein"/>
    <property type="match status" value="1"/>
</dbReference>
<dbReference type="FunFam" id="3.30.70.330:FF:000021">
    <property type="entry name" value="Polyadenylate-binding protein"/>
    <property type="match status" value="1"/>
</dbReference>
<dbReference type="FunFam" id="3.30.70.330:FF:000042">
    <property type="entry name" value="Polyadenylate-binding protein"/>
    <property type="match status" value="1"/>
</dbReference>
<dbReference type="FunFam" id="3.30.70.330:FF:000154">
    <property type="entry name" value="Polyadenylate-binding protein"/>
    <property type="match status" value="1"/>
</dbReference>
<dbReference type="Gene3D" id="3.30.70.330">
    <property type="match status" value="4"/>
</dbReference>
<dbReference type="Gene3D" id="1.10.1900.10">
    <property type="entry name" value="c-terminal domain of poly(a) binding protein"/>
    <property type="match status" value="1"/>
</dbReference>
<dbReference type="InterPro" id="IPR012677">
    <property type="entry name" value="Nucleotide-bd_a/b_plait_sf"/>
</dbReference>
<dbReference type="InterPro" id="IPR036053">
    <property type="entry name" value="PABP-dom"/>
</dbReference>
<dbReference type="InterPro" id="IPR006515">
    <property type="entry name" value="PABP_1234"/>
</dbReference>
<dbReference type="InterPro" id="IPR002004">
    <property type="entry name" value="PABP_HYD_C"/>
</dbReference>
<dbReference type="InterPro" id="IPR034364">
    <property type="entry name" value="PABP_RRM1"/>
</dbReference>
<dbReference type="InterPro" id="IPR035979">
    <property type="entry name" value="RBD_domain_sf"/>
</dbReference>
<dbReference type="InterPro" id="IPR045305">
    <property type="entry name" value="RRM2_I_PABPs"/>
</dbReference>
<dbReference type="InterPro" id="IPR000504">
    <property type="entry name" value="RRM_dom"/>
</dbReference>
<dbReference type="InterPro" id="IPR003954">
    <property type="entry name" value="RRM_dom_euk"/>
</dbReference>
<dbReference type="NCBIfam" id="TIGR01628">
    <property type="entry name" value="PABP-1234"/>
    <property type="match status" value="1"/>
</dbReference>
<dbReference type="PANTHER" id="PTHR24012">
    <property type="entry name" value="RNA BINDING PROTEIN"/>
    <property type="match status" value="1"/>
</dbReference>
<dbReference type="Pfam" id="PF00658">
    <property type="entry name" value="MLLE"/>
    <property type="match status" value="1"/>
</dbReference>
<dbReference type="Pfam" id="PF00076">
    <property type="entry name" value="RRM_1"/>
    <property type="match status" value="4"/>
</dbReference>
<dbReference type="SMART" id="SM00517">
    <property type="entry name" value="PolyA"/>
    <property type="match status" value="1"/>
</dbReference>
<dbReference type="SMART" id="SM00360">
    <property type="entry name" value="RRM"/>
    <property type="match status" value="4"/>
</dbReference>
<dbReference type="SMART" id="SM00361">
    <property type="entry name" value="RRM_1"/>
    <property type="match status" value="3"/>
</dbReference>
<dbReference type="SUPFAM" id="SSF63570">
    <property type="entry name" value="PABC (PABP) domain"/>
    <property type="match status" value="1"/>
</dbReference>
<dbReference type="SUPFAM" id="SSF54928">
    <property type="entry name" value="RNA-binding domain, RBD"/>
    <property type="match status" value="2"/>
</dbReference>
<dbReference type="PROSITE" id="PS51309">
    <property type="entry name" value="PABC"/>
    <property type="match status" value="1"/>
</dbReference>
<dbReference type="PROSITE" id="PS50102">
    <property type="entry name" value="RRM"/>
    <property type="match status" value="4"/>
</dbReference>
<name>PABP1_PONAB</name>
<proteinExistence type="evidence at transcript level"/>
<gene>
    <name type="primary">PABPC1</name>
</gene>
<keyword id="KW-0007">Acetylation</keyword>
<keyword id="KW-0966">Cell projection</keyword>
<keyword id="KW-0963">Cytoplasm</keyword>
<keyword id="KW-0488">Methylation</keyword>
<keyword id="KW-0507">mRNA processing</keyword>
<keyword id="KW-0508">mRNA splicing</keyword>
<keyword id="KW-0866">Nonsense-mediated mRNA decay</keyword>
<keyword id="KW-0539">Nucleus</keyword>
<keyword id="KW-0597">Phosphoprotein</keyword>
<keyword id="KW-1185">Reference proteome</keyword>
<keyword id="KW-0677">Repeat</keyword>
<keyword id="KW-0694">RNA-binding</keyword>
<keyword id="KW-0747">Spliceosome</keyword>
<sequence>MNPSAPSYPMASLYVGDLHPDATEAMLYEKFSPAGPILSIRVCRDMITRRSLGYAYVNFQQPADAERALDTMNFDVIKGKPVRIMWSQRDPSLRKSGVGNIFIKNLDKSIDNKALYDTFSAFGNILSCKVVCDENGSKGYGFVHFETQEAAERAIEKMNGMLLNDRKVFVGRFKSRKEREAELGARAKEFTNVYIKNFGEDMDDERLKDLFGKFGPALSVKVMTDESGKSKGFGFVSFERHEDAQKAVDEMNGKELNGKQIYVGRAQKKVERQTELKRKFEQMKQDRITRYQGVNLYVKNLDDGIDDERLRKEFSPFGTITSAKVMMEGGRSKGFGFVCFSSPEEATKAVTEMNGRIVATKPLYVALAQRKEERQAHLTNQYMQRMASVRAVPNPVINPYQPAPPSGYFMAAIPQTQNRAAYYPPSQIAQLRPSPRWTAQGARPHPFQNMPGAIRPAAPRPPFSTMRPASSQVPRVMSTQRVANTSTQTMGPRPAAAAAAATPAVRTVPQYKYAAGVRNPQQHLNAQPQVTMQQPAVHVQGQEPLTASMLASAPPQEQKQMLGERLFPLIQAMHPTLAGKITGMLLEIDNSELLHMLESPESLRSKVDEAVAVLQAHQAKEAAQKAVNSATGVPTV</sequence>
<protein>
    <recommendedName>
        <fullName>Polyadenylate-binding protein 1</fullName>
        <shortName>PABP-1</shortName>
        <shortName>Poly(A)-binding protein 1</shortName>
    </recommendedName>
</protein>
<reference key="1">
    <citation type="submission" date="2004-11" db="EMBL/GenBank/DDBJ databases">
        <authorList>
            <consortium name="The German cDNA consortium"/>
        </authorList>
    </citation>
    <scope>NUCLEOTIDE SEQUENCE [LARGE SCALE MRNA]</scope>
    <source>
        <tissue>Kidney</tissue>
    </source>
</reference>
<evidence type="ECO:0000250" key="1">
    <source>
        <dbReference type="UniProtKB" id="P11940"/>
    </source>
</evidence>
<evidence type="ECO:0000250" key="2">
    <source>
        <dbReference type="UniProtKB" id="P29341"/>
    </source>
</evidence>
<evidence type="ECO:0000255" key="3">
    <source>
        <dbReference type="PROSITE-ProRule" id="PRU00176"/>
    </source>
</evidence>
<evidence type="ECO:0000255" key="4">
    <source>
        <dbReference type="PROSITE-ProRule" id="PRU00641"/>
    </source>
</evidence>
<evidence type="ECO:0000305" key="5"/>
<comment type="function">
    <text evidence="1">Binds the poly(A) tail of mRNA, including that of its own transcript, and regulates processes of mRNA metabolism such as pre-mRNA splicing and mRNA stability. Its function in translational initiation regulation can either be enhanced by PAIP1 or repressed by PAIP2. Can probably bind to cytoplasmic RNA sequences other than poly(A) in vivo. Binds to N6-methyladenosine (m6A)-containing mRNAs and contributes to MYC stability by binding to m6A-containing MYC mRNAs. Involved in translationally coupled mRNA turnover. Implicated with other RNA-binding proteins in the cytoplasmic deadenylation/translational and decay interplay of the FOS mRNA mediated by the major coding-region determinant of instability (mCRD) domain. Involved in regulation of nonsense-mediated decay (NMD) of mRNAs containing premature stop codons; for the recognition of premature termination codons (PTC) and initiation of NMD a competitive interaction between UPF1 and PABPC1 with the ribosome-bound release factors is proposed. By binding to long poly(A) tails, may protect them from uridylation by ZCCHC6/ZCCHC11 and hence contribute to mRNA stability.</text>
</comment>
<comment type="subunit">
    <text evidence="1 2">May form homodimers. Component of a multisubunit autoregulatory ribonucleoprotein complex (ARC), at least composed of IGF2BP1, PABPC1 and CSDE1. Directly interacts with IGF2BP1. Part of a complex associated with the FOS mCRD domain and consisting of HNRPD, SYNCRIP, PAIP1 and CSDE1/UNR. Interacts with PAIP1 and PAIP2 (via the PABPC1-interacting motifs PAM1 and PAM2). Interacts with PAIP1 with a 1:1 stoichiometry and with PAIP2 with a 1:2 stoichiometry. The interaction with CSDE1 is direct and RNA-independent (By similarity). Found in a mRNP complex with YBX2. Interacts with TENT2/GLD2 (By similarity). Identified in the spliceosome C complex. Identified in a mRNP complex, at least composed of DHX9, DDX3X, ELAVL1, HNRNPU, IGF2BP1, ILF3, PABPC1, PCBP2, PTBP2, STAU1, STAU2, SYNCRIP and YBX1. The interaction with DDX3X is direct and RNA-independent. This interaction increases in stressed cells and decreases during cell recovery. Identified in a IGF2BP1-dependent mRNP granule complex containing untranslated mRNAs. Interacts with NXF1/TAP (By similarity). Interacts with PIWIL1 (By similarity). Interacts with AGO1, AGO2, GSPT1 and GSPT2. Interacts with LARP4B. Interacts (via the second and third RRM domains and the C-terminus) with PAIP2B (via central acidic portion and C-terminus). Forms a complex with LARP1 and SHFL. Interacts with LARP4. Interacts with ZFC3H1 in a RNase-sensitive manner. Interacts with TRIM71 (via NHL repeats) in an RNA-dependent manner. Interacts with TENT5C; the interaction has no effect on TENT5C poly(A) polymerase function. Interacts with G3BP1 and G3BP2 (By similarity). Interacts with ENDOV; the interaction is RNA-dependent and stimulates ENDOV activity (By similarity). Interacts with UPF1; the interaction is RNA-dependent (By similarity). Interacts with IGF2BP2 and IGF2BP3. May interact with SETX. Interacts with RBM46. Interacts with PAN3 (By similarity).</text>
</comment>
<comment type="subcellular location">
    <subcellularLocation>
        <location evidence="1">Cytoplasm</location>
    </subcellularLocation>
    <subcellularLocation>
        <location evidence="1">Cytoplasm</location>
        <location evidence="1">Stress granule</location>
    </subcellularLocation>
    <subcellularLocation>
        <location evidence="1">Nucleus</location>
    </subcellularLocation>
    <subcellularLocation>
        <location evidence="1">Cell projection</location>
        <location evidence="1">Lamellipodium</location>
    </subcellularLocation>
    <text evidence="1">Localized in cytoplasmic mRNP granules containing untranslated mRNAs (By similarity). Shuttles between the cytoplasm and the nucleus (By similarity). During stress and in the absence of DDX3X, localizes to the nucleus (By similarity). At the leading edge of migrating fibroblasts, colocalizes with DDX3X (By similarity). Relocalizes to cytoplasmic stress granules upon cellular stress where it colocalizes with ENDOV (By similarity).</text>
</comment>
<comment type="domain">
    <text evidence="1">The RNA-binding domains RRM1 and RRM2 and the C-terminus (last 138 amino acids) regions interact respectively with the PABPC1-interacting motif-1 (PAM1) and -2 (PAM2) of PAIP1, respectively.</text>
</comment>
<comment type="domain">
    <text evidence="1">The RNA-binding domains RRM2 and RRM3 and the C-terminus (last 138 amino acids) regions interact with the PABPC1-interacting motif-1 (PAM1) and -2 (PAM2) of PAIP2, respectively.</text>
</comment>
<comment type="PTM">
    <text evidence="1">Phosphorylated by MAPKAPK2.</text>
</comment>
<comment type="PTM">
    <text evidence="1">Methylated by CARM1. Arg-493 is dimethylated, probably to asymmetric dimethylarginine (By similarity).</text>
</comment>
<comment type="similarity">
    <text evidence="5">Belongs to the polyadenylate-binding protein type-1 family.</text>
</comment>